<name>ISPT_CHLCV</name>
<comment type="function">
    <text evidence="1">Catalyzes the condensation of isopentenyl diphosphate (IPP) with allylic pyrophosphates generating different type of terpenoids.</text>
</comment>
<comment type="cofactor">
    <cofactor evidence="1">
        <name>Mg(2+)</name>
        <dbReference type="ChEBI" id="CHEBI:18420"/>
    </cofactor>
    <text evidence="1">Binds 2 magnesium ions per subunit.</text>
</comment>
<comment type="subunit">
    <text evidence="1">Homodimer.</text>
</comment>
<comment type="similarity">
    <text evidence="1">Belongs to the UPP synthase family.</text>
</comment>
<accession>Q824H0</accession>
<proteinExistence type="inferred from homology"/>
<protein>
    <recommendedName>
        <fullName evidence="1">Isoprenyl transferase</fullName>
        <ecNumber evidence="1">2.5.1.-</ecNumber>
    </recommendedName>
</protein>
<feature type="chain" id="PRO_0000123592" description="Isoprenyl transferase">
    <location>
        <begin position="1"/>
        <end position="250"/>
    </location>
</feature>
<feature type="active site" evidence="1">
    <location>
        <position position="27"/>
    </location>
</feature>
<feature type="active site" description="Proton acceptor" evidence="1">
    <location>
        <position position="79"/>
    </location>
</feature>
<feature type="binding site" evidence="1">
    <location>
        <position position="27"/>
    </location>
    <ligand>
        <name>Mg(2+)</name>
        <dbReference type="ChEBI" id="CHEBI:18420"/>
    </ligand>
</feature>
<feature type="binding site" evidence="1">
    <location>
        <begin position="28"/>
        <end position="31"/>
    </location>
    <ligand>
        <name>substrate</name>
    </ligand>
</feature>
<feature type="binding site" evidence="1">
    <location>
        <position position="32"/>
    </location>
    <ligand>
        <name>substrate</name>
    </ligand>
</feature>
<feature type="binding site" evidence="1">
    <location>
        <position position="48"/>
    </location>
    <ligand>
        <name>substrate</name>
    </ligand>
</feature>
<feature type="binding site" evidence="1">
    <location>
        <begin position="76"/>
        <end position="78"/>
    </location>
    <ligand>
        <name>substrate</name>
    </ligand>
</feature>
<feature type="binding site" evidence="1">
    <location>
        <position position="80"/>
    </location>
    <ligand>
        <name>substrate</name>
    </ligand>
</feature>
<feature type="binding site" evidence="1">
    <location>
        <position position="82"/>
    </location>
    <ligand>
        <name>substrate</name>
    </ligand>
</feature>
<feature type="binding site" evidence="1">
    <location>
        <position position="199"/>
    </location>
    <ligand>
        <name>substrate</name>
    </ligand>
</feature>
<feature type="binding site" evidence="1">
    <location>
        <begin position="205"/>
        <end position="207"/>
    </location>
    <ligand>
        <name>substrate</name>
    </ligand>
</feature>
<feature type="binding site" evidence="1">
    <location>
        <position position="218"/>
    </location>
    <ligand>
        <name>Mg(2+)</name>
        <dbReference type="ChEBI" id="CHEBI:18420"/>
    </ligand>
</feature>
<organism>
    <name type="scientific">Chlamydia caviae (strain ATCC VR-813 / DSM 19441 / 03DC25 / GPIC)</name>
    <name type="common">Chlamydophila caviae</name>
    <dbReference type="NCBI Taxonomy" id="227941"/>
    <lineage>
        <taxon>Bacteria</taxon>
        <taxon>Pseudomonadati</taxon>
        <taxon>Chlamydiota</taxon>
        <taxon>Chlamydiia</taxon>
        <taxon>Chlamydiales</taxon>
        <taxon>Chlamydiaceae</taxon>
        <taxon>Chlamydia/Chlamydophila group</taxon>
        <taxon>Chlamydia</taxon>
    </lineage>
</organism>
<reference key="1">
    <citation type="journal article" date="2003" name="Nucleic Acids Res.">
        <title>Genome sequence of Chlamydophila caviae (Chlamydia psittaci GPIC): examining the role of niche-specific genes in the evolution of the Chlamydiaceae.</title>
        <authorList>
            <person name="Read T.D."/>
            <person name="Myers G.S.A."/>
            <person name="Brunham R.C."/>
            <person name="Nelson W.C."/>
            <person name="Paulsen I.T."/>
            <person name="Heidelberg J.F."/>
            <person name="Holtzapple E.K."/>
            <person name="Khouri H.M."/>
            <person name="Federova N.B."/>
            <person name="Carty H.A."/>
            <person name="Umayam L.A."/>
            <person name="Haft D.H."/>
            <person name="Peterson J.D."/>
            <person name="Beanan M.J."/>
            <person name="White O."/>
            <person name="Salzberg S.L."/>
            <person name="Hsia R.-C."/>
            <person name="McClarty G."/>
            <person name="Rank R.G."/>
            <person name="Bavoil P.M."/>
            <person name="Fraser C.M."/>
        </authorList>
    </citation>
    <scope>NUCLEOTIDE SEQUENCE [LARGE SCALE GENOMIC DNA]</scope>
    <source>
        <strain>ATCC VR-813 / DSM 19441 / 03DC25 / GPIC</strain>
    </source>
</reference>
<gene>
    <name evidence="1" type="primary">uppS</name>
    <name type="ordered locus">CCA_00176</name>
</gene>
<keyword id="KW-0460">Magnesium</keyword>
<keyword id="KW-0479">Metal-binding</keyword>
<keyword id="KW-0808">Transferase</keyword>
<dbReference type="EC" id="2.5.1.-" evidence="1"/>
<dbReference type="EMBL" id="AE015925">
    <property type="protein sequence ID" value="AAP04927.1"/>
    <property type="molecule type" value="Genomic_DNA"/>
</dbReference>
<dbReference type="RefSeq" id="WP_011006148.1">
    <property type="nucleotide sequence ID" value="NC_003361.3"/>
</dbReference>
<dbReference type="SMR" id="Q824H0"/>
<dbReference type="STRING" id="227941.CCA_00176"/>
<dbReference type="KEGG" id="cca:CCA_00176"/>
<dbReference type="eggNOG" id="COG0020">
    <property type="taxonomic scope" value="Bacteria"/>
</dbReference>
<dbReference type="HOGENOM" id="CLU_038505_1_1_0"/>
<dbReference type="OrthoDB" id="4191603at2"/>
<dbReference type="Proteomes" id="UP000002193">
    <property type="component" value="Chromosome"/>
</dbReference>
<dbReference type="GO" id="GO:0045547">
    <property type="term" value="F:ditrans,polycis-polyprenyl diphosphate synthase [(2E,6E)-farnesyl diphosphate specific] activity"/>
    <property type="evidence" value="ECO:0007669"/>
    <property type="project" value="TreeGrafter"/>
</dbReference>
<dbReference type="GO" id="GO:0000287">
    <property type="term" value="F:magnesium ion binding"/>
    <property type="evidence" value="ECO:0007669"/>
    <property type="project" value="UniProtKB-UniRule"/>
</dbReference>
<dbReference type="GO" id="GO:0016094">
    <property type="term" value="P:polyprenol biosynthetic process"/>
    <property type="evidence" value="ECO:0007669"/>
    <property type="project" value="TreeGrafter"/>
</dbReference>
<dbReference type="CDD" id="cd00475">
    <property type="entry name" value="Cis_IPPS"/>
    <property type="match status" value="1"/>
</dbReference>
<dbReference type="FunFam" id="3.40.1180.10:FF:000001">
    <property type="entry name" value="(2E,6E)-farnesyl-diphosphate-specific ditrans,polycis-undecaprenyl-diphosphate synthase"/>
    <property type="match status" value="1"/>
</dbReference>
<dbReference type="Gene3D" id="3.40.1180.10">
    <property type="entry name" value="Decaprenyl diphosphate synthase-like"/>
    <property type="match status" value="1"/>
</dbReference>
<dbReference type="HAMAP" id="MF_01139">
    <property type="entry name" value="ISPT"/>
    <property type="match status" value="1"/>
</dbReference>
<dbReference type="InterPro" id="IPR001441">
    <property type="entry name" value="UPP_synth-like"/>
</dbReference>
<dbReference type="InterPro" id="IPR018520">
    <property type="entry name" value="UPP_synth-like_CS"/>
</dbReference>
<dbReference type="InterPro" id="IPR036424">
    <property type="entry name" value="UPP_synth-like_sf"/>
</dbReference>
<dbReference type="NCBIfam" id="NF011413">
    <property type="entry name" value="PRK14840.1"/>
    <property type="match status" value="1"/>
</dbReference>
<dbReference type="NCBIfam" id="TIGR00055">
    <property type="entry name" value="uppS"/>
    <property type="match status" value="1"/>
</dbReference>
<dbReference type="PANTHER" id="PTHR10291:SF0">
    <property type="entry name" value="DEHYDRODOLICHYL DIPHOSPHATE SYNTHASE 2"/>
    <property type="match status" value="1"/>
</dbReference>
<dbReference type="PANTHER" id="PTHR10291">
    <property type="entry name" value="DEHYDRODOLICHYL DIPHOSPHATE SYNTHASE FAMILY MEMBER"/>
    <property type="match status" value="1"/>
</dbReference>
<dbReference type="Pfam" id="PF01255">
    <property type="entry name" value="Prenyltransf"/>
    <property type="match status" value="1"/>
</dbReference>
<dbReference type="SUPFAM" id="SSF64005">
    <property type="entry name" value="Undecaprenyl diphosphate synthase"/>
    <property type="match status" value="1"/>
</dbReference>
<dbReference type="PROSITE" id="PS01066">
    <property type="entry name" value="UPP_SYNTHASE"/>
    <property type="match status" value="1"/>
</dbReference>
<evidence type="ECO:0000255" key="1">
    <source>
        <dbReference type="HAMAP-Rule" id="MF_01139"/>
    </source>
</evidence>
<sequence>MPLTLKQEDQVNVSLQSLPRHVAIIMDGNRRWHQQHQTQCTLKQTSGHYYGAKALPSIIESAFSLGIEVLTLFAFSTENFLRSTEEVEELFSLFHSQLDEQFPYLIENKIRLRCIGNLSALPLQLQQKISEISLKTHQNSHRDLVLAINYGGKDELVRAFKKLHQDLVEQKISSDSISEELIRLYLDTSEMPDPDLLIRTGGEMRVSNFLLWQIAYTELYVTDILWPDFKPNHFLDAIKAYQHRSRRGGR</sequence>